<feature type="signal peptide" evidence="3">
    <location>
        <begin position="1"/>
        <end position="21"/>
    </location>
</feature>
<feature type="chain" id="PRO_0000240357" description="Prolyl 3-hydroxylase 2">
    <location>
        <begin position="22"/>
        <end position="703"/>
    </location>
</feature>
<feature type="repeat" description="TPR 1">
    <location>
        <begin position="42"/>
        <end position="75"/>
    </location>
</feature>
<feature type="repeat" description="TPR 2">
    <location>
        <begin position="144"/>
        <end position="177"/>
    </location>
</feature>
<feature type="repeat" description="TPR 3">
    <location>
        <begin position="205"/>
        <end position="238"/>
    </location>
</feature>
<feature type="repeat" description="TPR 4">
    <location>
        <begin position="301"/>
        <end position="334"/>
    </location>
</feature>
<feature type="domain" description="Fe2OG dioxygenase" evidence="4">
    <location>
        <begin position="552"/>
        <end position="666"/>
    </location>
</feature>
<feature type="region of interest" description="Disordered" evidence="6">
    <location>
        <begin position="17"/>
        <end position="40"/>
    </location>
</feature>
<feature type="short sequence motif" description="Prevents secretion from ER" evidence="5">
    <location>
        <begin position="700"/>
        <end position="703"/>
    </location>
</feature>
<feature type="compositionally biased region" description="Basic and acidic residues" evidence="6">
    <location>
        <begin position="25"/>
        <end position="36"/>
    </location>
</feature>
<feature type="active site" evidence="1">
    <location>
        <position position="657"/>
    </location>
</feature>
<feature type="binding site">
    <location>
        <position position="575"/>
    </location>
    <ligand>
        <name>Fe cation</name>
        <dbReference type="ChEBI" id="CHEBI:24875"/>
    </ligand>
</feature>
<feature type="binding site">
    <location>
        <position position="577"/>
    </location>
    <ligand>
        <name>Fe cation</name>
        <dbReference type="ChEBI" id="CHEBI:24875"/>
    </ligand>
</feature>
<feature type="binding site">
    <location>
        <position position="647"/>
    </location>
    <ligand>
        <name>Fe cation</name>
        <dbReference type="ChEBI" id="CHEBI:24875"/>
    </ligand>
</feature>
<feature type="glycosylation site" description="N-linked (GlcNAc...) asparagine" evidence="3">
    <location>
        <position position="444"/>
    </location>
</feature>
<feature type="glycosylation site" description="N-linked (GlcNAc...) asparagine" evidence="3">
    <location>
        <position position="544"/>
    </location>
</feature>
<feature type="sequence conflict" description="In Ref. 2; BAC36342." evidence="11" ref="2">
    <original>P</original>
    <variation>A</variation>
    <location>
        <position position="497"/>
    </location>
</feature>
<evidence type="ECO:0000250" key="1"/>
<evidence type="ECO:0000250" key="2">
    <source>
        <dbReference type="UniProtKB" id="Q8IVL5"/>
    </source>
</evidence>
<evidence type="ECO:0000255" key="3"/>
<evidence type="ECO:0000255" key="4">
    <source>
        <dbReference type="PROSITE-ProRule" id="PRU00805"/>
    </source>
</evidence>
<evidence type="ECO:0000255" key="5">
    <source>
        <dbReference type="PROSITE-ProRule" id="PRU10138"/>
    </source>
</evidence>
<evidence type="ECO:0000256" key="6">
    <source>
        <dbReference type="SAM" id="MobiDB-lite"/>
    </source>
</evidence>
<evidence type="ECO:0000269" key="7">
    <source>
    </source>
</evidence>
<evidence type="ECO:0000269" key="8">
    <source>
    </source>
</evidence>
<evidence type="ECO:0000269" key="9">
    <source>
    </source>
</evidence>
<evidence type="ECO:0000303" key="10">
    <source>
    </source>
</evidence>
<evidence type="ECO:0000305" key="11"/>
<evidence type="ECO:0000305" key="12">
    <source>
    </source>
</evidence>
<evidence type="ECO:0000312" key="13">
    <source>
        <dbReference type="MGI" id="MGI:2146663"/>
    </source>
</evidence>
<dbReference type="EC" id="1.14.11.7" evidence="12"/>
<dbReference type="EMBL" id="AJ430350">
    <property type="protein sequence ID" value="CAD23038.1"/>
    <property type="molecule type" value="mRNA"/>
</dbReference>
<dbReference type="EMBL" id="AK076434">
    <property type="protein sequence ID" value="BAC36342.1"/>
    <property type="molecule type" value="mRNA"/>
</dbReference>
<dbReference type="CCDS" id="CCDS28086.1"/>
<dbReference type="RefSeq" id="NP_775555.1">
    <property type="nucleotide sequence ID" value="NM_173379.3"/>
</dbReference>
<dbReference type="SMR" id="Q8CG71"/>
<dbReference type="BioGRID" id="229159">
    <property type="interactions" value="2"/>
</dbReference>
<dbReference type="FunCoup" id="Q8CG71">
    <property type="interactions" value="741"/>
</dbReference>
<dbReference type="IntAct" id="Q8CG71">
    <property type="interactions" value="1"/>
</dbReference>
<dbReference type="STRING" id="10090.ENSMUSP00000038056"/>
<dbReference type="GlyCosmos" id="Q8CG71">
    <property type="glycosylation" value="2 sites, No reported glycans"/>
</dbReference>
<dbReference type="GlyGen" id="Q8CG71">
    <property type="glycosylation" value="3 sites"/>
</dbReference>
<dbReference type="iPTMnet" id="Q8CG71"/>
<dbReference type="PhosphoSitePlus" id="Q8CG71"/>
<dbReference type="jPOST" id="Q8CG71"/>
<dbReference type="PaxDb" id="10090-ENSMUSP00000038056"/>
<dbReference type="PeptideAtlas" id="Q8CG71"/>
<dbReference type="ProteomicsDB" id="294304"/>
<dbReference type="Pumba" id="Q8CG71"/>
<dbReference type="Antibodypedia" id="1998">
    <property type="antibodies" value="110 antibodies from 20 providers"/>
</dbReference>
<dbReference type="DNASU" id="210530"/>
<dbReference type="Ensembl" id="ENSMUST00000039990.6">
    <property type="protein sequence ID" value="ENSMUSP00000038056.6"/>
    <property type="gene ID" value="ENSMUSG00000038168.6"/>
</dbReference>
<dbReference type="GeneID" id="210530"/>
<dbReference type="KEGG" id="mmu:210530"/>
<dbReference type="UCSC" id="uc007yuy.1">
    <property type="organism name" value="mouse"/>
</dbReference>
<dbReference type="AGR" id="MGI:2146663"/>
<dbReference type="CTD" id="55214"/>
<dbReference type="MGI" id="MGI:2146663">
    <property type="gene designation" value="P3h2"/>
</dbReference>
<dbReference type="VEuPathDB" id="HostDB:ENSMUSG00000038168"/>
<dbReference type="eggNOG" id="KOG4459">
    <property type="taxonomic scope" value="Eukaryota"/>
</dbReference>
<dbReference type="GeneTree" id="ENSGT00940000159593"/>
<dbReference type="HOGENOM" id="CLU_017820_0_0_1"/>
<dbReference type="InParanoid" id="Q8CG71"/>
<dbReference type="OMA" id="PDDADMW"/>
<dbReference type="OrthoDB" id="8517835at2759"/>
<dbReference type="PhylomeDB" id="Q8CG71"/>
<dbReference type="TreeFam" id="TF320837"/>
<dbReference type="BRENDA" id="1.14.11.7">
    <property type="organism ID" value="3474"/>
</dbReference>
<dbReference type="Reactome" id="R-MMU-1650814">
    <property type="pathway name" value="Collagen biosynthesis and modifying enzymes"/>
</dbReference>
<dbReference type="BioGRID-ORCS" id="210530">
    <property type="hits" value="1 hit in 78 CRISPR screens"/>
</dbReference>
<dbReference type="ChiTaRS" id="P3h2">
    <property type="organism name" value="mouse"/>
</dbReference>
<dbReference type="PRO" id="PR:Q8CG71"/>
<dbReference type="Proteomes" id="UP000000589">
    <property type="component" value="Chromosome 16"/>
</dbReference>
<dbReference type="RNAct" id="Q8CG71">
    <property type="molecule type" value="protein"/>
</dbReference>
<dbReference type="Bgee" id="ENSMUSG00000038168">
    <property type="expression patterns" value="Expressed in right kidney and 162 other cell types or tissues"/>
</dbReference>
<dbReference type="GO" id="GO:0005604">
    <property type="term" value="C:basement membrane"/>
    <property type="evidence" value="ECO:0000314"/>
    <property type="project" value="UniProtKB"/>
</dbReference>
<dbReference type="GO" id="GO:0005829">
    <property type="term" value="C:cytosol"/>
    <property type="evidence" value="ECO:0007669"/>
    <property type="project" value="Ensembl"/>
</dbReference>
<dbReference type="GO" id="GO:0005783">
    <property type="term" value="C:endoplasmic reticulum"/>
    <property type="evidence" value="ECO:0000250"/>
    <property type="project" value="UniProtKB"/>
</dbReference>
<dbReference type="GO" id="GO:0005794">
    <property type="term" value="C:Golgi apparatus"/>
    <property type="evidence" value="ECO:0000250"/>
    <property type="project" value="UniProtKB"/>
</dbReference>
<dbReference type="GO" id="GO:0005654">
    <property type="term" value="C:nucleoplasm"/>
    <property type="evidence" value="ECO:0007669"/>
    <property type="project" value="Ensembl"/>
</dbReference>
<dbReference type="GO" id="GO:0016529">
    <property type="term" value="C:sarcoplasmic reticulum"/>
    <property type="evidence" value="ECO:0007669"/>
    <property type="project" value="UniProtKB-SubCell"/>
</dbReference>
<dbReference type="GO" id="GO:0005506">
    <property type="term" value="F:iron ion binding"/>
    <property type="evidence" value="ECO:0007669"/>
    <property type="project" value="InterPro"/>
</dbReference>
<dbReference type="GO" id="GO:0031418">
    <property type="term" value="F:L-ascorbic acid binding"/>
    <property type="evidence" value="ECO:0007669"/>
    <property type="project" value="UniProtKB-KW"/>
</dbReference>
<dbReference type="GO" id="GO:0019797">
    <property type="term" value="F:procollagen-proline 3-dioxygenase activity"/>
    <property type="evidence" value="ECO:0000250"/>
    <property type="project" value="UniProtKB"/>
</dbReference>
<dbReference type="GO" id="GO:0032963">
    <property type="term" value="P:collagen metabolic process"/>
    <property type="evidence" value="ECO:0000250"/>
    <property type="project" value="UniProtKB"/>
</dbReference>
<dbReference type="GO" id="GO:0008285">
    <property type="term" value="P:negative regulation of cell population proliferation"/>
    <property type="evidence" value="ECO:0000250"/>
    <property type="project" value="UniProtKB"/>
</dbReference>
<dbReference type="GO" id="GO:0019511">
    <property type="term" value="P:peptidyl-proline hydroxylation"/>
    <property type="evidence" value="ECO:0000250"/>
    <property type="project" value="UniProtKB"/>
</dbReference>
<dbReference type="FunFam" id="2.60.120.620:FF:000003">
    <property type="entry name" value="Prolyl 3-hydroxylase 2"/>
    <property type="match status" value="1"/>
</dbReference>
<dbReference type="Gene3D" id="2.60.120.620">
    <property type="entry name" value="q2cbj1_9rhob like domain"/>
    <property type="match status" value="1"/>
</dbReference>
<dbReference type="Gene3D" id="1.25.40.10">
    <property type="entry name" value="Tetratricopeptide repeat domain"/>
    <property type="match status" value="2"/>
</dbReference>
<dbReference type="InterPro" id="IPR056585">
    <property type="entry name" value="Leprecan_dom"/>
</dbReference>
<dbReference type="InterPro" id="IPR005123">
    <property type="entry name" value="Oxoglu/Fe-dep_dioxygenase_dom"/>
</dbReference>
<dbReference type="InterPro" id="IPR039575">
    <property type="entry name" value="P3H"/>
</dbReference>
<dbReference type="InterPro" id="IPR006620">
    <property type="entry name" value="Pro_4_hyd_alph"/>
</dbReference>
<dbReference type="InterPro" id="IPR044862">
    <property type="entry name" value="Pro_4_hyd_alph_FE2OG_OXY"/>
</dbReference>
<dbReference type="InterPro" id="IPR011990">
    <property type="entry name" value="TPR-like_helical_dom_sf"/>
</dbReference>
<dbReference type="PANTHER" id="PTHR14049">
    <property type="entry name" value="LEPRECAN 1"/>
    <property type="match status" value="1"/>
</dbReference>
<dbReference type="PANTHER" id="PTHR14049:SF1">
    <property type="entry name" value="PROLYL 3-HYDROXYLASE 2"/>
    <property type="match status" value="1"/>
</dbReference>
<dbReference type="Pfam" id="PF13640">
    <property type="entry name" value="2OG-FeII_Oxy_3"/>
    <property type="match status" value="1"/>
</dbReference>
<dbReference type="Pfam" id="PF23557">
    <property type="entry name" value="TPR_leprecan"/>
    <property type="match status" value="1"/>
</dbReference>
<dbReference type="SMART" id="SM00702">
    <property type="entry name" value="P4Hc"/>
    <property type="match status" value="1"/>
</dbReference>
<dbReference type="SUPFAM" id="SSF48452">
    <property type="entry name" value="TPR-like"/>
    <property type="match status" value="1"/>
</dbReference>
<dbReference type="PROSITE" id="PS00014">
    <property type="entry name" value="ER_TARGET"/>
    <property type="match status" value="1"/>
</dbReference>
<dbReference type="PROSITE" id="PS51471">
    <property type="entry name" value="FE2OG_OXY"/>
    <property type="match status" value="1"/>
</dbReference>
<proteinExistence type="evidence at protein level"/>
<name>P3H2_MOUSE</name>
<organism>
    <name type="scientific">Mus musculus</name>
    <name type="common">Mouse</name>
    <dbReference type="NCBI Taxonomy" id="10090"/>
    <lineage>
        <taxon>Eukaryota</taxon>
        <taxon>Metazoa</taxon>
        <taxon>Chordata</taxon>
        <taxon>Craniata</taxon>
        <taxon>Vertebrata</taxon>
        <taxon>Euteleostomi</taxon>
        <taxon>Mammalia</taxon>
        <taxon>Eutheria</taxon>
        <taxon>Euarchontoglires</taxon>
        <taxon>Glires</taxon>
        <taxon>Rodentia</taxon>
        <taxon>Myomorpha</taxon>
        <taxon>Muroidea</taxon>
        <taxon>Muridae</taxon>
        <taxon>Murinae</taxon>
        <taxon>Mus</taxon>
        <taxon>Mus</taxon>
    </lineage>
</organism>
<keyword id="KW-0223">Dioxygenase</keyword>
<keyword id="KW-0256">Endoplasmic reticulum</keyword>
<keyword id="KW-0325">Glycoprotein</keyword>
<keyword id="KW-0333">Golgi apparatus</keyword>
<keyword id="KW-0408">Iron</keyword>
<keyword id="KW-0479">Metal-binding</keyword>
<keyword id="KW-0560">Oxidoreductase</keyword>
<keyword id="KW-1185">Reference proteome</keyword>
<keyword id="KW-0677">Repeat</keyword>
<keyword id="KW-0703">Sarcoplasmic reticulum</keyword>
<keyword id="KW-0732">Signal</keyword>
<keyword id="KW-0802">TPR repeat</keyword>
<keyword id="KW-0847">Vitamin C</keyword>
<sequence>MRESTWVSLLLLLLLPTPQRGGPQDGRRSPEPEPERGPLQPFDLLYASGVAAYYSGDYERAVRDLEAALSSHRRLRDIRTRCARHCAARRPLAPPGAGPGAELPFFRAVLERARCSRSCQSQRLGGPASRHRVSEDVRSDFQRRVPYNYLQRAYIKLNQLEKAMEAAHTFFMANPEHMEMQQDLEDYKATARVEAPLLDREAKPHLESYNAGVKHYEADDFESAIKYFEQALREYFNEDMECRALCEGPQRFEEYEYLGYKGGLYEAIADHYMQVLVCQHECVRELATRPGRLSPIENFLPLHYDYLQFAYYRVGEYVKALECAKAYLMFHPDNEDVLDNVDFYESLLDDSTDPASIEAREDLTAFVKRHKLEAELIKLAAEGLGFSYAEPNYWISYGGRQDENRVPSGVNMDGAEVHGLSMGKKSPPKIGRDLREGGPLLYENITFVYNSEQLNGTQRVLLDNVLSQEQCRELHSVANGIMLVGDGYRGKTSPHTPNEKFEGATVLKALKFGYEGRVPLKSARLFYDISEKARKIVESYFMLNSTLYFSYTHMVCRTALSGQQDRRNDLSHPIHADNCLLDPEANECWKEPPAYTFRDYSALLYMNDDFDGGEFIFTEMDAKTVTASIKPKCGRMISFSSGGENPHGVKAVTRGQRCAVALWFTLDPLYRELERIQADEVIAILDQEQRGKHGLNINPKDEL</sequence>
<comment type="function">
    <text evidence="2 8 9">Prolyl 3-hydroxylase that catalyzes the post-translational formation of 3-hydroxyproline on collagens (PubMed:24368846, PubMed:25645914). Contributes to proline 3-hydroxylation of collagen COL4A1 and COL1A1 in tendons, the eye sclera and in the eye lens capsule (PubMed:25645914). Has high activity with the type IV collagen COL4A1, and lower activity with COL1A1. Catalyzes hydroxylation of the first Pro in Gly-Pro-Hyp sequences where Hyp is 4-hydroxyproline. Has no activity on substrates that have proline instead of 4-hydroxyproline in the third position (By similarity).</text>
</comment>
<comment type="catalytic activity">
    <reaction evidence="12">
        <text>L-prolyl-[collagen] + 2-oxoglutarate + O2 = trans-3-hydroxy-L-prolyl-[collagen] + succinate + CO2</text>
        <dbReference type="Rhea" id="RHEA:22872"/>
        <dbReference type="Rhea" id="RHEA-COMP:11676"/>
        <dbReference type="Rhea" id="RHEA-COMP:11678"/>
        <dbReference type="ChEBI" id="CHEBI:15379"/>
        <dbReference type="ChEBI" id="CHEBI:16526"/>
        <dbReference type="ChEBI" id="CHEBI:16810"/>
        <dbReference type="ChEBI" id="CHEBI:30031"/>
        <dbReference type="ChEBI" id="CHEBI:50342"/>
        <dbReference type="ChEBI" id="CHEBI:85428"/>
        <dbReference type="EC" id="1.14.11.7"/>
    </reaction>
</comment>
<comment type="cofactor">
    <cofactor evidence="2">
        <name>Fe cation</name>
        <dbReference type="ChEBI" id="CHEBI:24875"/>
    </cofactor>
</comment>
<comment type="cofactor">
    <cofactor evidence="2">
        <name>L-ascorbate</name>
        <dbReference type="ChEBI" id="CHEBI:38290"/>
    </cofactor>
</comment>
<comment type="subcellular location">
    <subcellularLocation>
        <location evidence="2 5">Endoplasmic reticulum</location>
    </subcellularLocation>
    <subcellularLocation>
        <location evidence="2">Sarcoplasmic reticulum</location>
    </subcellularLocation>
    <subcellularLocation>
        <location evidence="2">Golgi apparatus</location>
    </subcellularLocation>
</comment>
<comment type="tissue specificity">
    <text evidence="7 9">Detected in kidney (PubMed:25645914). Detected on kidney tubular cells, pancreas acinar cells, Schwann cells of the peripheral nerve in the pinna, and in tunica adventitia, the smooth muscle layer of the aortic wall (at protein level) (PubMed:18487197). Detected in lung, skeletal muscle and kidney (PubMed:18487197). Detected in kidney glomeruli and in prehypertrophic regions of long bone from neonates (PubMed:25645914). In the eye, detected in the epithelial layer of the cornea and at lower levels in the sclera at the posterior end of the eye (PubMed:25645914).</text>
</comment>
<comment type="disruption phenotype">
    <text evidence="8 9">Contradictory results have been described and may be due to differences in the methods used for gene disruption (PubMed:24368846, PubMed:25645914). No visible phenotype, but decreased 3-hydroxyproline formation in collagen COL4A1 and COL1A1 (PubMed:25645914). Full embryonic lethality; the vast majority die before 8.5 dpc (PubMed:24368846). The embryos appear normal, but are surrounded by maternal platelet aggregates and blood clots that form at about 6.5 dpc, resulting in embryonic death (PubMed:24368846). Maternal platelet aggregation is triggered by interaction between maternal Gp6 and embryonic type IV collagen that lacks 3-hydroxyproline (PubMed:24368846). Likewise, pregnant females deficient for Gp6 and P3h2 that bear embryos deficient in P3h2 and heterozygous for Gp6 do not produce any live offspring (PubMed:24368846). In contrast, mutant mice deficient in Gp6 and P3h2 are born at the expected Mendelian rate and have no visible phenotype (PubMed:24368846).</text>
</comment>
<comment type="similarity">
    <text evidence="11">Belongs to the leprecan family.</text>
</comment>
<reference key="1">
    <citation type="journal article" date="2004" name="Biochem. Biophys. Res. Commun.">
        <title>LEPREL1, a novel ER and Golgi resident member of the Leprecan family.</title>
        <authorList>
            <person name="Jaernum S."/>
            <person name="Kjellman C."/>
            <person name="Darabi A."/>
            <person name="Nilsson I."/>
            <person name="Edvardsen K."/>
            <person name="Aaman P."/>
        </authorList>
    </citation>
    <scope>NUCLEOTIDE SEQUENCE [MRNA]</scope>
    <source>
        <strain>C57BL/6J</strain>
    </source>
</reference>
<reference key="2">
    <citation type="journal article" date="2005" name="Science">
        <title>The transcriptional landscape of the mammalian genome.</title>
        <authorList>
            <person name="Carninci P."/>
            <person name="Kasukawa T."/>
            <person name="Katayama S."/>
            <person name="Gough J."/>
            <person name="Frith M.C."/>
            <person name="Maeda N."/>
            <person name="Oyama R."/>
            <person name="Ravasi T."/>
            <person name="Lenhard B."/>
            <person name="Wells C."/>
            <person name="Kodzius R."/>
            <person name="Shimokawa K."/>
            <person name="Bajic V.B."/>
            <person name="Brenner S.E."/>
            <person name="Batalov S."/>
            <person name="Forrest A.R."/>
            <person name="Zavolan M."/>
            <person name="Davis M.J."/>
            <person name="Wilming L.G."/>
            <person name="Aidinis V."/>
            <person name="Allen J.E."/>
            <person name="Ambesi-Impiombato A."/>
            <person name="Apweiler R."/>
            <person name="Aturaliya R.N."/>
            <person name="Bailey T.L."/>
            <person name="Bansal M."/>
            <person name="Baxter L."/>
            <person name="Beisel K.W."/>
            <person name="Bersano T."/>
            <person name="Bono H."/>
            <person name="Chalk A.M."/>
            <person name="Chiu K.P."/>
            <person name="Choudhary V."/>
            <person name="Christoffels A."/>
            <person name="Clutterbuck D.R."/>
            <person name="Crowe M.L."/>
            <person name="Dalla E."/>
            <person name="Dalrymple B.P."/>
            <person name="de Bono B."/>
            <person name="Della Gatta G."/>
            <person name="di Bernardo D."/>
            <person name="Down T."/>
            <person name="Engstrom P."/>
            <person name="Fagiolini M."/>
            <person name="Faulkner G."/>
            <person name="Fletcher C.F."/>
            <person name="Fukushima T."/>
            <person name="Furuno M."/>
            <person name="Futaki S."/>
            <person name="Gariboldi M."/>
            <person name="Georgii-Hemming P."/>
            <person name="Gingeras T.R."/>
            <person name="Gojobori T."/>
            <person name="Green R.E."/>
            <person name="Gustincich S."/>
            <person name="Harbers M."/>
            <person name="Hayashi Y."/>
            <person name="Hensch T.K."/>
            <person name="Hirokawa N."/>
            <person name="Hill D."/>
            <person name="Huminiecki L."/>
            <person name="Iacono M."/>
            <person name="Ikeo K."/>
            <person name="Iwama A."/>
            <person name="Ishikawa T."/>
            <person name="Jakt M."/>
            <person name="Kanapin A."/>
            <person name="Katoh M."/>
            <person name="Kawasawa Y."/>
            <person name="Kelso J."/>
            <person name="Kitamura H."/>
            <person name="Kitano H."/>
            <person name="Kollias G."/>
            <person name="Krishnan S.P."/>
            <person name="Kruger A."/>
            <person name="Kummerfeld S.K."/>
            <person name="Kurochkin I.V."/>
            <person name="Lareau L.F."/>
            <person name="Lazarevic D."/>
            <person name="Lipovich L."/>
            <person name="Liu J."/>
            <person name="Liuni S."/>
            <person name="McWilliam S."/>
            <person name="Madan Babu M."/>
            <person name="Madera M."/>
            <person name="Marchionni L."/>
            <person name="Matsuda H."/>
            <person name="Matsuzawa S."/>
            <person name="Miki H."/>
            <person name="Mignone F."/>
            <person name="Miyake S."/>
            <person name="Morris K."/>
            <person name="Mottagui-Tabar S."/>
            <person name="Mulder N."/>
            <person name="Nakano N."/>
            <person name="Nakauchi H."/>
            <person name="Ng P."/>
            <person name="Nilsson R."/>
            <person name="Nishiguchi S."/>
            <person name="Nishikawa S."/>
            <person name="Nori F."/>
            <person name="Ohara O."/>
            <person name="Okazaki Y."/>
            <person name="Orlando V."/>
            <person name="Pang K.C."/>
            <person name="Pavan W.J."/>
            <person name="Pavesi G."/>
            <person name="Pesole G."/>
            <person name="Petrovsky N."/>
            <person name="Piazza S."/>
            <person name="Reed J."/>
            <person name="Reid J.F."/>
            <person name="Ring B.Z."/>
            <person name="Ringwald M."/>
            <person name="Rost B."/>
            <person name="Ruan Y."/>
            <person name="Salzberg S.L."/>
            <person name="Sandelin A."/>
            <person name="Schneider C."/>
            <person name="Schoenbach C."/>
            <person name="Sekiguchi K."/>
            <person name="Semple C.A."/>
            <person name="Seno S."/>
            <person name="Sessa L."/>
            <person name="Sheng Y."/>
            <person name="Shibata Y."/>
            <person name="Shimada H."/>
            <person name="Shimada K."/>
            <person name="Silva D."/>
            <person name="Sinclair B."/>
            <person name="Sperling S."/>
            <person name="Stupka E."/>
            <person name="Sugiura K."/>
            <person name="Sultana R."/>
            <person name="Takenaka Y."/>
            <person name="Taki K."/>
            <person name="Tammoja K."/>
            <person name="Tan S.L."/>
            <person name="Tang S."/>
            <person name="Taylor M.S."/>
            <person name="Tegner J."/>
            <person name="Teichmann S.A."/>
            <person name="Ueda H.R."/>
            <person name="van Nimwegen E."/>
            <person name="Verardo R."/>
            <person name="Wei C.L."/>
            <person name="Yagi K."/>
            <person name="Yamanishi H."/>
            <person name="Zabarovsky E."/>
            <person name="Zhu S."/>
            <person name="Zimmer A."/>
            <person name="Hide W."/>
            <person name="Bult C."/>
            <person name="Grimmond S.M."/>
            <person name="Teasdale R.D."/>
            <person name="Liu E.T."/>
            <person name="Brusic V."/>
            <person name="Quackenbush J."/>
            <person name="Wahlestedt C."/>
            <person name="Mattick J.S."/>
            <person name="Hume D.A."/>
            <person name="Kai C."/>
            <person name="Sasaki D."/>
            <person name="Tomaru Y."/>
            <person name="Fukuda S."/>
            <person name="Kanamori-Katayama M."/>
            <person name="Suzuki M."/>
            <person name="Aoki J."/>
            <person name="Arakawa T."/>
            <person name="Iida J."/>
            <person name="Imamura K."/>
            <person name="Itoh M."/>
            <person name="Kato T."/>
            <person name="Kawaji H."/>
            <person name="Kawagashira N."/>
            <person name="Kawashima T."/>
            <person name="Kojima M."/>
            <person name="Kondo S."/>
            <person name="Konno H."/>
            <person name="Nakano K."/>
            <person name="Ninomiya N."/>
            <person name="Nishio T."/>
            <person name="Okada M."/>
            <person name="Plessy C."/>
            <person name="Shibata K."/>
            <person name="Shiraki T."/>
            <person name="Suzuki S."/>
            <person name="Tagami M."/>
            <person name="Waki K."/>
            <person name="Watahiki A."/>
            <person name="Okamura-Oho Y."/>
            <person name="Suzuki H."/>
            <person name="Kawai J."/>
            <person name="Hayashizaki Y."/>
        </authorList>
    </citation>
    <scope>NUCLEOTIDE SEQUENCE [LARGE SCALE MRNA] OF 295-703</scope>
    <source>
        <strain>C57BL/6J</strain>
        <tissue>Head</tissue>
    </source>
</reference>
<reference key="3">
    <citation type="journal article" date="2008" name="J. Biol. Chem.">
        <title>Characterization of recombinant human prolyl 3-hydroxylase isoenzyme 2, an enzyme modifying the basement membrane collagen IV.</title>
        <authorList>
            <person name="Tiainen P."/>
            <person name="Pasanen A."/>
            <person name="Sormunen R."/>
            <person name="Myllyharju J."/>
        </authorList>
    </citation>
    <scope>TISSUE SPECIFICITY</scope>
</reference>
<reference key="4">
    <citation type="journal article" date="2010" name="Cell">
        <title>A tissue-specific atlas of mouse protein phosphorylation and expression.</title>
        <authorList>
            <person name="Huttlin E.L."/>
            <person name="Jedrychowski M.P."/>
            <person name="Elias J.E."/>
            <person name="Goswami T."/>
            <person name="Rad R."/>
            <person name="Beausoleil S.A."/>
            <person name="Villen J."/>
            <person name="Haas W."/>
            <person name="Sowa M.E."/>
            <person name="Gygi S.P."/>
        </authorList>
    </citation>
    <scope>IDENTIFICATION BY MASS SPECTROMETRY [LARGE SCALE ANALYSIS]</scope>
    <source>
        <tissue>Kidney</tissue>
    </source>
</reference>
<reference key="5">
    <citation type="journal article" date="2014" name="Proc. Natl. Acad. Sci. U.S.A.">
        <title>Biological role of prolyl 3-hydroxylation in type IV collagen.</title>
        <authorList>
            <person name="Pokidysheva E."/>
            <person name="Boudko S."/>
            <person name="Vranka J."/>
            <person name="Zientek K."/>
            <person name="Maddox K."/>
            <person name="Moser M."/>
            <person name="Faessler R."/>
            <person name="Ware J."/>
            <person name="Baechinger H.P."/>
        </authorList>
    </citation>
    <scope>DISRUPTION PHENOTYPE</scope>
    <scope>FUNCTION</scope>
</reference>
<reference key="6">
    <citation type="journal article" date="2015" name="J. Biol. Chem.">
        <title>Post-translationally abnormal collagens of prolyl 3-hydroxylase-2 null mice offer a pathobiological mechanism for the high myopia linked to human LEPREL1 mutations.</title>
        <authorList>
            <person name="Hudson D.M."/>
            <person name="Joeng K.S."/>
            <person name="Werther R."/>
            <person name="Rajagopal A."/>
            <person name="Weis M."/>
            <person name="Lee B.H."/>
            <person name="Eyre D.R."/>
        </authorList>
    </citation>
    <scope>DISRUPTION PHENOTYPE</scope>
    <scope>FUNCTION</scope>
    <scope>CATALYTIC ACTIVITY</scope>
    <scope>TISSUE SPECIFICITY</scope>
</reference>
<gene>
    <name evidence="13" type="primary">P3h2</name>
    <name evidence="10" type="synonym">Leprel1</name>
</gene>
<accession>Q8CG71</accession>
<accession>Q8C673</accession>
<protein>
    <recommendedName>
        <fullName evidence="13">Prolyl 3-hydroxylase 2</fullName>
        <ecNumber evidence="12">1.14.11.7</ecNumber>
    </recommendedName>
    <alternativeName>
        <fullName evidence="10">Leprecan-like protein 1</fullName>
    </alternativeName>
</protein>